<name>SPT7_DROME</name>
<gene>
    <name evidence="6 9" type="primary">Spt7</name>
    <name evidence="9" type="ORF">CG6506</name>
</gene>
<accession>Q9VX12</accession>
<accession>Q8MSV3</accession>
<organism evidence="10">
    <name type="scientific">Drosophila melanogaster</name>
    <name type="common">Fruit fly</name>
    <dbReference type="NCBI Taxonomy" id="7227"/>
    <lineage>
        <taxon>Eukaryota</taxon>
        <taxon>Metazoa</taxon>
        <taxon>Ecdysozoa</taxon>
        <taxon>Arthropoda</taxon>
        <taxon>Hexapoda</taxon>
        <taxon>Insecta</taxon>
        <taxon>Pterygota</taxon>
        <taxon>Neoptera</taxon>
        <taxon>Endopterygota</taxon>
        <taxon>Diptera</taxon>
        <taxon>Brachycera</taxon>
        <taxon>Muscomorpha</taxon>
        <taxon>Ephydroidea</taxon>
        <taxon>Drosophilidae</taxon>
        <taxon>Drosophila</taxon>
        <taxon>Sophophora</taxon>
    </lineage>
</organism>
<protein>
    <recommendedName>
        <fullName evidence="7">SAGA complex subunit Spt7</fullName>
    </recommendedName>
</protein>
<evidence type="ECO:0000269" key="1">
    <source>
    </source>
</evidence>
<evidence type="ECO:0000269" key="2">
    <source>
    </source>
</evidence>
<evidence type="ECO:0000269" key="3">
    <source>
    </source>
</evidence>
<evidence type="ECO:0000269" key="4">
    <source>
    </source>
</evidence>
<evidence type="ECO:0000269" key="5">
    <source>
    </source>
</evidence>
<evidence type="ECO:0000303" key="6">
    <source>
    </source>
</evidence>
<evidence type="ECO:0000305" key="7"/>
<evidence type="ECO:0000312" key="8">
    <source>
        <dbReference type="EMBL" id="AAM49930.1"/>
    </source>
</evidence>
<evidence type="ECO:0000312" key="9">
    <source>
        <dbReference type="FlyBase" id="FBgn0030874"/>
    </source>
</evidence>
<evidence type="ECO:0000312" key="10">
    <source>
        <dbReference type="Proteomes" id="UP000000803"/>
    </source>
</evidence>
<proteinExistence type="evidence at protein level"/>
<feature type="chain" id="PRO_0000462579" description="SAGA complex subunit Spt7">
    <location>
        <begin position="1"/>
        <end position="359"/>
    </location>
</feature>
<dbReference type="EMBL" id="AE014298">
    <property type="protein sequence ID" value="AAF48771.3"/>
    <property type="molecule type" value="Genomic_DNA"/>
</dbReference>
<dbReference type="EMBL" id="AY118561">
    <property type="protein sequence ID" value="AAM49930.1"/>
    <property type="molecule type" value="mRNA"/>
</dbReference>
<dbReference type="RefSeq" id="NP_573248.2">
    <property type="nucleotide sequence ID" value="NM_133020.4"/>
</dbReference>
<dbReference type="ComplexPortal" id="CPX-2644">
    <property type="entry name" value="SAGA complex"/>
</dbReference>
<dbReference type="FunCoup" id="Q9VX12">
    <property type="interactions" value="393"/>
</dbReference>
<dbReference type="IntAct" id="Q9VX12">
    <property type="interactions" value="8"/>
</dbReference>
<dbReference type="STRING" id="7227.FBpp0074239"/>
<dbReference type="PaxDb" id="7227-FBpp0074239"/>
<dbReference type="DNASU" id="32766"/>
<dbReference type="EnsemblMetazoa" id="FBtr0074465">
    <property type="protein sequence ID" value="FBpp0074239"/>
    <property type="gene ID" value="FBgn0030874"/>
</dbReference>
<dbReference type="GeneID" id="32766"/>
<dbReference type="KEGG" id="dme:Dmel_CG6506"/>
<dbReference type="UCSC" id="CG6506-RA">
    <property type="organism name" value="d. melanogaster"/>
</dbReference>
<dbReference type="AGR" id="FB:FBgn0030874"/>
<dbReference type="CTD" id="32766"/>
<dbReference type="FlyBase" id="FBgn0030874">
    <property type="gene designation" value="Spt7"/>
</dbReference>
<dbReference type="VEuPathDB" id="VectorBase:FBgn0030874"/>
<dbReference type="eggNOG" id="ENOG502QQTJ">
    <property type="taxonomic scope" value="Eukaryota"/>
</dbReference>
<dbReference type="HOGENOM" id="CLU_770031_0_0_1"/>
<dbReference type="OMA" id="FQKPIWF"/>
<dbReference type="OrthoDB" id="7845034at2759"/>
<dbReference type="BioGRID-ORCS" id="32766">
    <property type="hits" value="1 hit in 1 CRISPR screen"/>
</dbReference>
<dbReference type="Proteomes" id="UP000000803">
    <property type="component" value="Chromosome X"/>
</dbReference>
<dbReference type="Bgee" id="FBgn0030874">
    <property type="expression patterns" value="Expressed in male accessory gland main cell (Drosophila) in male reproductive gland and 42 other cell types or tissues"/>
</dbReference>
<dbReference type="GO" id="GO:0005634">
    <property type="term" value="C:nucleus"/>
    <property type="evidence" value="ECO:0000314"/>
    <property type="project" value="FlyBase"/>
</dbReference>
<dbReference type="GO" id="GO:0000124">
    <property type="term" value="C:SAGA complex"/>
    <property type="evidence" value="ECO:0000314"/>
    <property type="project" value="FlyBase"/>
</dbReference>
<dbReference type="GO" id="GO:0046982">
    <property type="term" value="F:protein heterodimerization activity"/>
    <property type="evidence" value="ECO:0007669"/>
    <property type="project" value="InterPro"/>
</dbReference>
<dbReference type="GO" id="GO:0003713">
    <property type="term" value="F:transcription coactivator activity"/>
    <property type="evidence" value="ECO:0000318"/>
    <property type="project" value="GO_Central"/>
</dbReference>
<dbReference type="CDD" id="cd06847">
    <property type="entry name" value="HFD_SUPT7L"/>
    <property type="match status" value="1"/>
</dbReference>
<dbReference type="Gene3D" id="1.10.20.10">
    <property type="entry name" value="Histone, subunit A"/>
    <property type="match status" value="1"/>
</dbReference>
<dbReference type="InterPro" id="IPR009072">
    <property type="entry name" value="Histone-fold"/>
</dbReference>
<dbReference type="InterPro" id="IPR039460">
    <property type="entry name" value="SUPT7L"/>
</dbReference>
<dbReference type="PANTHER" id="PTHR28598">
    <property type="entry name" value="STAGA COMPLEX 65 SUBUNIT GAMMA"/>
    <property type="match status" value="1"/>
</dbReference>
<dbReference type="PANTHER" id="PTHR28598:SF1">
    <property type="entry name" value="STAGA COMPLEX 65 SUBUNIT GAMMA"/>
    <property type="match status" value="1"/>
</dbReference>
<sequence>MQTEHWGSLPAEDDGGQLTPDKYVPTAAKKLKLDEIRQRGDPQPQEKHHKLELRSALVTQTIEVMKQTEVLQSLIETYSNKNGSSNYLLNPCLMIPEVDFPPENAAELVGSQKFQKPIWFTPTVDTAYSRGDPEAYPEIPSSACRQAMRKVMCGMLRLAGFTDCSESAVQLLTDATEEFLRSFIGEYRGYYDSQPRLQNSTVLQLVPLERAHFAQTGTSLTQVHNYYKHKVLARNRAEIAEFNSVLQEYDKLMKESQSSMQKQHNEFNGHDFLNILDNSATGSSQSIGGMAMGDMLQDLGGSTGSSGTVSSQQMLYGLLDGQISSNTSNMTGTSGNGSTGGNGNGNGATISNFHATFET</sequence>
<reference evidence="10" key="1">
    <citation type="journal article" date="2000" name="Science">
        <title>The genome sequence of Drosophila melanogaster.</title>
        <authorList>
            <person name="Adams M.D."/>
            <person name="Celniker S.E."/>
            <person name="Holt R.A."/>
            <person name="Evans C.A."/>
            <person name="Gocayne J.D."/>
            <person name="Amanatides P.G."/>
            <person name="Scherer S.E."/>
            <person name="Li P.W."/>
            <person name="Hoskins R.A."/>
            <person name="Galle R.F."/>
            <person name="George R.A."/>
            <person name="Lewis S.E."/>
            <person name="Richards S."/>
            <person name="Ashburner M."/>
            <person name="Henderson S.N."/>
            <person name="Sutton G.G."/>
            <person name="Wortman J.R."/>
            <person name="Yandell M.D."/>
            <person name="Zhang Q."/>
            <person name="Chen L.X."/>
            <person name="Brandon R.C."/>
            <person name="Rogers Y.-H.C."/>
            <person name="Blazej R.G."/>
            <person name="Champe M."/>
            <person name="Pfeiffer B.D."/>
            <person name="Wan K.H."/>
            <person name="Doyle C."/>
            <person name="Baxter E.G."/>
            <person name="Helt G."/>
            <person name="Nelson C.R."/>
            <person name="Miklos G.L.G."/>
            <person name="Abril J.F."/>
            <person name="Agbayani A."/>
            <person name="An H.-J."/>
            <person name="Andrews-Pfannkoch C."/>
            <person name="Baldwin D."/>
            <person name="Ballew R.M."/>
            <person name="Basu A."/>
            <person name="Baxendale J."/>
            <person name="Bayraktaroglu L."/>
            <person name="Beasley E.M."/>
            <person name="Beeson K.Y."/>
            <person name="Benos P.V."/>
            <person name="Berman B.P."/>
            <person name="Bhandari D."/>
            <person name="Bolshakov S."/>
            <person name="Borkova D."/>
            <person name="Botchan M.R."/>
            <person name="Bouck J."/>
            <person name="Brokstein P."/>
            <person name="Brottier P."/>
            <person name="Burtis K.C."/>
            <person name="Busam D.A."/>
            <person name="Butler H."/>
            <person name="Cadieu E."/>
            <person name="Center A."/>
            <person name="Chandra I."/>
            <person name="Cherry J.M."/>
            <person name="Cawley S."/>
            <person name="Dahlke C."/>
            <person name="Davenport L.B."/>
            <person name="Davies P."/>
            <person name="de Pablos B."/>
            <person name="Delcher A."/>
            <person name="Deng Z."/>
            <person name="Mays A.D."/>
            <person name="Dew I."/>
            <person name="Dietz S.M."/>
            <person name="Dodson K."/>
            <person name="Doup L.E."/>
            <person name="Downes M."/>
            <person name="Dugan-Rocha S."/>
            <person name="Dunkov B.C."/>
            <person name="Dunn P."/>
            <person name="Durbin K.J."/>
            <person name="Evangelista C.C."/>
            <person name="Ferraz C."/>
            <person name="Ferriera S."/>
            <person name="Fleischmann W."/>
            <person name="Fosler C."/>
            <person name="Gabrielian A.E."/>
            <person name="Garg N.S."/>
            <person name="Gelbart W.M."/>
            <person name="Glasser K."/>
            <person name="Glodek A."/>
            <person name="Gong F."/>
            <person name="Gorrell J.H."/>
            <person name="Gu Z."/>
            <person name="Guan P."/>
            <person name="Harris M."/>
            <person name="Harris N.L."/>
            <person name="Harvey D.A."/>
            <person name="Heiman T.J."/>
            <person name="Hernandez J.R."/>
            <person name="Houck J."/>
            <person name="Hostin D."/>
            <person name="Houston K.A."/>
            <person name="Howland T.J."/>
            <person name="Wei M.-H."/>
            <person name="Ibegwam C."/>
            <person name="Jalali M."/>
            <person name="Kalush F."/>
            <person name="Karpen G.H."/>
            <person name="Ke Z."/>
            <person name="Kennison J.A."/>
            <person name="Ketchum K.A."/>
            <person name="Kimmel B.E."/>
            <person name="Kodira C.D."/>
            <person name="Kraft C.L."/>
            <person name="Kravitz S."/>
            <person name="Kulp D."/>
            <person name="Lai Z."/>
            <person name="Lasko P."/>
            <person name="Lei Y."/>
            <person name="Levitsky A.A."/>
            <person name="Li J.H."/>
            <person name="Li Z."/>
            <person name="Liang Y."/>
            <person name="Lin X."/>
            <person name="Liu X."/>
            <person name="Mattei B."/>
            <person name="McIntosh T.C."/>
            <person name="McLeod M.P."/>
            <person name="McPherson D."/>
            <person name="Merkulov G."/>
            <person name="Milshina N.V."/>
            <person name="Mobarry C."/>
            <person name="Morris J."/>
            <person name="Moshrefi A."/>
            <person name="Mount S.M."/>
            <person name="Moy M."/>
            <person name="Murphy B."/>
            <person name="Murphy L."/>
            <person name="Muzny D.M."/>
            <person name="Nelson D.L."/>
            <person name="Nelson D.R."/>
            <person name="Nelson K.A."/>
            <person name="Nixon K."/>
            <person name="Nusskern D.R."/>
            <person name="Pacleb J.M."/>
            <person name="Palazzolo M."/>
            <person name="Pittman G.S."/>
            <person name="Pan S."/>
            <person name="Pollard J."/>
            <person name="Puri V."/>
            <person name="Reese M.G."/>
            <person name="Reinert K."/>
            <person name="Remington K."/>
            <person name="Saunders R.D.C."/>
            <person name="Scheeler F."/>
            <person name="Shen H."/>
            <person name="Shue B.C."/>
            <person name="Siden-Kiamos I."/>
            <person name="Simpson M."/>
            <person name="Skupski M.P."/>
            <person name="Smith T.J."/>
            <person name="Spier E."/>
            <person name="Spradling A.C."/>
            <person name="Stapleton M."/>
            <person name="Strong R."/>
            <person name="Sun E."/>
            <person name="Svirskas R."/>
            <person name="Tector C."/>
            <person name="Turner R."/>
            <person name="Venter E."/>
            <person name="Wang A.H."/>
            <person name="Wang X."/>
            <person name="Wang Z.-Y."/>
            <person name="Wassarman D.A."/>
            <person name="Weinstock G.M."/>
            <person name="Weissenbach J."/>
            <person name="Williams S.M."/>
            <person name="Woodage T."/>
            <person name="Worley K.C."/>
            <person name="Wu D."/>
            <person name="Yang S."/>
            <person name="Yao Q.A."/>
            <person name="Ye J."/>
            <person name="Yeh R.-F."/>
            <person name="Zaveri J.S."/>
            <person name="Zhan M."/>
            <person name="Zhang G."/>
            <person name="Zhao Q."/>
            <person name="Zheng L."/>
            <person name="Zheng X.H."/>
            <person name="Zhong F.N."/>
            <person name="Zhong W."/>
            <person name="Zhou X."/>
            <person name="Zhu S.C."/>
            <person name="Zhu X."/>
            <person name="Smith H.O."/>
            <person name="Gibbs R.A."/>
            <person name="Myers E.W."/>
            <person name="Rubin G.M."/>
            <person name="Venter J.C."/>
        </authorList>
    </citation>
    <scope>NUCLEOTIDE SEQUENCE [LARGE SCALE GENOMIC DNA]</scope>
    <source>
        <strain evidence="10">Berkeley</strain>
    </source>
</reference>
<reference evidence="10" key="2">
    <citation type="journal article" date="2002" name="Genome Biol.">
        <title>Annotation of the Drosophila melanogaster euchromatic genome: a systematic review.</title>
        <authorList>
            <person name="Misra S."/>
            <person name="Crosby M.A."/>
            <person name="Mungall C.J."/>
            <person name="Matthews B.B."/>
            <person name="Campbell K.S."/>
            <person name="Hradecky P."/>
            <person name="Huang Y."/>
            <person name="Kaminker J.S."/>
            <person name="Millburn G.H."/>
            <person name="Prochnik S.E."/>
            <person name="Smith C.D."/>
            <person name="Tupy J.L."/>
            <person name="Whitfield E.J."/>
            <person name="Bayraktaroglu L."/>
            <person name="Berman B.P."/>
            <person name="Bettencourt B.R."/>
            <person name="Celniker S.E."/>
            <person name="de Grey A.D.N.J."/>
            <person name="Drysdale R.A."/>
            <person name="Harris N.L."/>
            <person name="Richter J."/>
            <person name="Russo S."/>
            <person name="Schroeder A.J."/>
            <person name="Shu S.Q."/>
            <person name="Stapleton M."/>
            <person name="Yamada C."/>
            <person name="Ashburner M."/>
            <person name="Gelbart W.M."/>
            <person name="Rubin G.M."/>
            <person name="Lewis S.E."/>
        </authorList>
    </citation>
    <scope>GENOME REANNOTATION</scope>
    <source>
        <strain evidence="10">Berkeley</strain>
    </source>
</reference>
<reference evidence="8" key="3">
    <citation type="journal article" date="2002" name="Genome Biol.">
        <title>A Drosophila full-length cDNA resource.</title>
        <authorList>
            <person name="Stapleton M."/>
            <person name="Carlson J.W."/>
            <person name="Brokstein P."/>
            <person name="Yu C."/>
            <person name="Champe M."/>
            <person name="George R.A."/>
            <person name="Guarin H."/>
            <person name="Kronmiller B."/>
            <person name="Pacleb J.M."/>
            <person name="Park S."/>
            <person name="Wan K.H."/>
            <person name="Rubin G.M."/>
            <person name="Celniker S.E."/>
        </authorList>
    </citation>
    <scope>NUCLEOTIDE SEQUENCE [LARGE SCALE MRNA]</scope>
    <source>
        <strain evidence="8">Berkeley</strain>
        <tissue evidence="8">Embryo</tissue>
    </source>
</reference>
<reference evidence="7" key="4">
    <citation type="journal article" date="2006" name="Mol. Cell. Biol.">
        <title>The essential gene wda encodes a WD40 repeat subunit of Drosophila SAGA required for histone H3 acetylation.</title>
        <authorList>
            <person name="Guelman S."/>
            <person name="Suganuma T."/>
            <person name="Florens L."/>
            <person name="Weake V."/>
            <person name="Swanson S.K."/>
            <person name="Washburn M.P."/>
            <person name="Abmayr S.M."/>
            <person name="Workman J.L."/>
        </authorList>
    </citation>
    <scope>FUNCTION</scope>
    <scope>IDENTIFICATION IN SAGA COMPLEX</scope>
    <scope>IDENTIFICATION BY MASS SPECTROMETRY</scope>
</reference>
<reference evidence="7" key="5">
    <citation type="journal article" date="2009" name="Genes Dev.">
        <title>A novel histone fold domain-containing protein that replaces TAF6 in Drosophila SAGA is required for SAGA-dependent gene expression.</title>
        <authorList>
            <person name="Weake V.M."/>
            <person name="Swanson S.K."/>
            <person name="Mushegian A."/>
            <person name="Florens L."/>
            <person name="Washburn M.P."/>
            <person name="Abmayr S.M."/>
            <person name="Workman J.L."/>
        </authorList>
    </citation>
    <scope>FUNCTION</scope>
    <scope>IDENTIFICATION IN SAGA COMPLEX</scope>
    <scope>SUBCELLULAR LOCATION</scope>
    <scope>IDENTIFICATION BY MASS SPECTROMETRY</scope>
</reference>
<reference evidence="7" key="6">
    <citation type="journal article" date="2011" name="Genes Dev.">
        <title>Post-transcription initiation function of the ubiquitous SAGA complex in tissue-specific gene activation.</title>
        <authorList>
            <person name="Weake V.M."/>
            <person name="Dyer J.O."/>
            <person name="Seidel C."/>
            <person name="Box A."/>
            <person name="Swanson S.K."/>
            <person name="Peak A."/>
            <person name="Florens L."/>
            <person name="Washburn M.P."/>
            <person name="Abmayr S.M."/>
            <person name="Workman J.L."/>
        </authorList>
    </citation>
    <scope>FUNCTION</scope>
    <scope>IDENTIFICATION IN SAGA COMPLEX</scope>
    <scope>DEVELOPMENTAL STAGE</scope>
    <scope>IDENTIFICATION BY MASS SPECTROMETRY</scope>
</reference>
<reference evidence="7" key="7">
    <citation type="journal article" date="2014" name="Genes Dev.">
        <title>Loss of Drosophila Ataxin-7, a SAGA subunit, reduces H2B ubiquitination and leads to neural and retinal degeneration.</title>
        <authorList>
            <person name="Mohan R.D."/>
            <person name="Dialynas G."/>
            <person name="Weake V.M."/>
            <person name="Liu J."/>
            <person name="Martin-Brown S."/>
            <person name="Florens L."/>
            <person name="Washburn M.P."/>
            <person name="Workman J.L."/>
            <person name="Abmayr S.M."/>
        </authorList>
    </citation>
    <scope>FUNCTION</scope>
    <scope>IDENTIFICATION IN THE SAGA COMPLEX</scope>
    <scope>SUBCELLULAR LOCATION</scope>
    <scope>IDENTIFICATION BY MASS SPECTROMETRY</scope>
</reference>
<reference evidence="7" key="8">
    <citation type="journal article" date="2019" name="J. Cell Sci.">
        <title>The Drosophila Dbf4 ortholog Chiffon forms a complex with Gcn5 that is necessary for histone acetylation and viability.</title>
        <authorList>
            <person name="Torres-Zelada E.F."/>
            <person name="Stephenson R.E."/>
            <person name="Alpsoy A."/>
            <person name="Anderson B.D."/>
            <person name="Swanson S.K."/>
            <person name="Florens L."/>
            <person name="Dykhuizen E.C."/>
            <person name="Washburn M.P."/>
            <person name="Weake V.M."/>
        </authorList>
    </citation>
    <scope>FUNCTION</scope>
    <scope>IDENTIFICATION IN THE SAGA COMPLEX</scope>
    <scope>INTERACTION WITH ADA2B</scope>
    <scope>IDENTIFICATION BY MASS SPECTROMETRY</scope>
</reference>
<keyword id="KW-0539">Nucleus</keyword>
<keyword id="KW-1185">Reference proteome</keyword>
<keyword id="KW-0804">Transcription</keyword>
<keyword id="KW-0805">Transcription regulation</keyword>
<comment type="function">
    <text evidence="1 2 3 4 5">Component of the transcription regulatory complex SAGA, a multiprotein complex that activates transcription by remodeling chromatin and mediating histone acetylation and deubiquitination (PubMed:16980620, PubMed:20008933, PubMed:21764853, PubMed:24493646, PubMed:30559249). The SAGA complex predominantly acetylates histone H3 (PubMed:30559249).</text>
</comment>
<comment type="subunit">
    <text evidence="1 2 3 4 5">Component of the Spt-Ada-Gcn5 acetyltransferase (SAGA) complex consisting of wda/Taf5L, Saf6, Taf9, Taf10b, Taf12, Ada1, Spt3, Spt7, Spt20, Sf3b3, Sf3b5, Nipped-A/Tra1, a histone acetyltransferase (HAT) module made up of Gcn5, Ada2b (Isoform B), Ada3 and Sgf29, and a deubiquitinase (DUB) module made up of not/nonstop, Sgf11 and e(y)2 tethered to SAGA by Atxn7 (PubMed:16980620, PubMed:20008933, PubMed:21764853, PubMed:24493646, PubMed:30559249). Interacts with Ada2b; the interaction is direct (PubMed:30559249).</text>
</comment>
<comment type="subcellular location">
    <subcellularLocation>
        <location evidence="2 4">Nucleus</location>
    </subcellularLocation>
</comment>
<comment type="developmental stage">
    <text evidence="3">Expressed in embryonic muscle and neuronal cells (at protein level).</text>
</comment>